<keyword id="KW-0028">Amino-acid biosynthesis</keyword>
<keyword id="KW-0067">ATP-binding</keyword>
<keyword id="KW-0963">Cytoplasm</keyword>
<keyword id="KW-0418">Kinase</keyword>
<keyword id="KW-0547">Nucleotide-binding</keyword>
<keyword id="KW-0791">Threonine biosynthesis</keyword>
<keyword id="KW-0808">Transferase</keyword>
<comment type="function">
    <text evidence="1">Catalyzes the ATP-dependent phosphorylation of L-homoserine to L-homoserine phosphate.</text>
</comment>
<comment type="catalytic activity">
    <reaction evidence="1">
        <text>L-homoserine + ATP = O-phospho-L-homoserine + ADP + H(+)</text>
        <dbReference type="Rhea" id="RHEA:13985"/>
        <dbReference type="ChEBI" id="CHEBI:15378"/>
        <dbReference type="ChEBI" id="CHEBI:30616"/>
        <dbReference type="ChEBI" id="CHEBI:57476"/>
        <dbReference type="ChEBI" id="CHEBI:57590"/>
        <dbReference type="ChEBI" id="CHEBI:456216"/>
        <dbReference type="EC" id="2.7.1.39"/>
    </reaction>
</comment>
<comment type="pathway">
    <text evidence="1">Amino-acid biosynthesis; L-threonine biosynthesis; L-threonine from L-aspartate: step 4/5.</text>
</comment>
<comment type="subcellular location">
    <subcellularLocation>
        <location evidence="1">Cytoplasm</location>
    </subcellularLocation>
</comment>
<comment type="similarity">
    <text evidence="1">Belongs to the GHMP kinase family. Homoserine kinase subfamily.</text>
</comment>
<name>KHSE_CUTAK</name>
<organism>
    <name type="scientific">Cutibacterium acnes (strain DSM 16379 / KPA171202)</name>
    <name type="common">Propionibacterium acnes</name>
    <dbReference type="NCBI Taxonomy" id="267747"/>
    <lineage>
        <taxon>Bacteria</taxon>
        <taxon>Bacillati</taxon>
        <taxon>Actinomycetota</taxon>
        <taxon>Actinomycetes</taxon>
        <taxon>Propionibacteriales</taxon>
        <taxon>Propionibacteriaceae</taxon>
        <taxon>Cutibacterium</taxon>
    </lineage>
</organism>
<protein>
    <recommendedName>
        <fullName evidence="1">Homoserine kinase</fullName>
        <shortName evidence="1">HK</shortName>
        <shortName evidence="1">HSK</shortName>
        <ecNumber evidence="1">2.7.1.39</ecNumber>
    </recommendedName>
</protein>
<accession>Q6A8B2</accession>
<sequence length="296" mass="31006">MDNSVRVRVPATSANLGPGYDCIGLALDLWDEVSVGVLDRPGVMIDVTGEGADTVPHDESHLVMATLRQGLVELGYPHPDAGLHLTAINSIPQSRGLGSSAAAVVSGLALAWGLARPGFPLDRSALLTMAAAIEGHPDNAAPAILGGAQLAWLDGEAVNHIGLTVNPSIVFRVYVPDRLVPTALARQVLPEQVDRVDAVHQVLAASLLVTALTTSPEHLLAATQDWIHQPYRRALMPESAALTDRLRGRGVATVISGAGPTVLALGSRDQLEKVSDVDTAGFVAHDLVLGEGVHFF</sequence>
<gene>
    <name evidence="1" type="primary">thrB</name>
    <name type="ordered locus">PPA1256</name>
</gene>
<dbReference type="EC" id="2.7.1.39" evidence="1"/>
<dbReference type="EMBL" id="AE017283">
    <property type="protein sequence ID" value="AAT83003.1"/>
    <property type="molecule type" value="Genomic_DNA"/>
</dbReference>
<dbReference type="RefSeq" id="WP_002517688.1">
    <property type="nucleotide sequence ID" value="NZ_CP025935.1"/>
</dbReference>
<dbReference type="SMR" id="Q6A8B2"/>
<dbReference type="EnsemblBacteria" id="AAT83003">
    <property type="protein sequence ID" value="AAT83003"/>
    <property type="gene ID" value="PPA1256"/>
</dbReference>
<dbReference type="KEGG" id="pac:PPA1256"/>
<dbReference type="eggNOG" id="COG0083">
    <property type="taxonomic scope" value="Bacteria"/>
</dbReference>
<dbReference type="HOGENOM" id="CLU_041243_0_1_11"/>
<dbReference type="UniPathway" id="UPA00050">
    <property type="reaction ID" value="UER00064"/>
</dbReference>
<dbReference type="Proteomes" id="UP000000603">
    <property type="component" value="Chromosome"/>
</dbReference>
<dbReference type="GO" id="GO:0005737">
    <property type="term" value="C:cytoplasm"/>
    <property type="evidence" value="ECO:0007669"/>
    <property type="project" value="UniProtKB-SubCell"/>
</dbReference>
<dbReference type="GO" id="GO:0005524">
    <property type="term" value="F:ATP binding"/>
    <property type="evidence" value="ECO:0007669"/>
    <property type="project" value="UniProtKB-UniRule"/>
</dbReference>
<dbReference type="GO" id="GO:0004413">
    <property type="term" value="F:homoserine kinase activity"/>
    <property type="evidence" value="ECO:0007669"/>
    <property type="project" value="UniProtKB-UniRule"/>
</dbReference>
<dbReference type="GO" id="GO:0009088">
    <property type="term" value="P:threonine biosynthetic process"/>
    <property type="evidence" value="ECO:0007669"/>
    <property type="project" value="UniProtKB-UniRule"/>
</dbReference>
<dbReference type="Gene3D" id="3.30.230.10">
    <property type="match status" value="1"/>
</dbReference>
<dbReference type="Gene3D" id="3.30.70.890">
    <property type="entry name" value="GHMP kinase, C-terminal domain"/>
    <property type="match status" value="1"/>
</dbReference>
<dbReference type="HAMAP" id="MF_00384">
    <property type="entry name" value="Homoser_kinase"/>
    <property type="match status" value="1"/>
</dbReference>
<dbReference type="InterPro" id="IPR013750">
    <property type="entry name" value="GHMP_kinase_C_dom"/>
</dbReference>
<dbReference type="InterPro" id="IPR036554">
    <property type="entry name" value="GHMP_kinase_C_sf"/>
</dbReference>
<dbReference type="InterPro" id="IPR006204">
    <property type="entry name" value="GHMP_kinase_N_dom"/>
</dbReference>
<dbReference type="InterPro" id="IPR006203">
    <property type="entry name" value="GHMP_knse_ATP-bd_CS"/>
</dbReference>
<dbReference type="InterPro" id="IPR000870">
    <property type="entry name" value="Homoserine_kinase"/>
</dbReference>
<dbReference type="InterPro" id="IPR020568">
    <property type="entry name" value="Ribosomal_Su5_D2-typ_SF"/>
</dbReference>
<dbReference type="InterPro" id="IPR014721">
    <property type="entry name" value="Ribsml_uS5_D2-typ_fold_subgr"/>
</dbReference>
<dbReference type="NCBIfam" id="TIGR00191">
    <property type="entry name" value="thrB"/>
    <property type="match status" value="1"/>
</dbReference>
<dbReference type="PANTHER" id="PTHR20861:SF1">
    <property type="entry name" value="HOMOSERINE KINASE"/>
    <property type="match status" value="1"/>
</dbReference>
<dbReference type="PANTHER" id="PTHR20861">
    <property type="entry name" value="HOMOSERINE/4-DIPHOSPHOCYTIDYL-2-C-METHYL-D-ERYTHRITOL KINASE"/>
    <property type="match status" value="1"/>
</dbReference>
<dbReference type="Pfam" id="PF08544">
    <property type="entry name" value="GHMP_kinases_C"/>
    <property type="match status" value="1"/>
</dbReference>
<dbReference type="Pfam" id="PF00288">
    <property type="entry name" value="GHMP_kinases_N"/>
    <property type="match status" value="1"/>
</dbReference>
<dbReference type="PIRSF" id="PIRSF000676">
    <property type="entry name" value="Homoser_kin"/>
    <property type="match status" value="1"/>
</dbReference>
<dbReference type="PRINTS" id="PR00958">
    <property type="entry name" value="HOMSERKINASE"/>
</dbReference>
<dbReference type="SUPFAM" id="SSF55060">
    <property type="entry name" value="GHMP Kinase, C-terminal domain"/>
    <property type="match status" value="1"/>
</dbReference>
<dbReference type="SUPFAM" id="SSF54211">
    <property type="entry name" value="Ribosomal protein S5 domain 2-like"/>
    <property type="match status" value="1"/>
</dbReference>
<dbReference type="PROSITE" id="PS00627">
    <property type="entry name" value="GHMP_KINASES_ATP"/>
    <property type="match status" value="1"/>
</dbReference>
<evidence type="ECO:0000255" key="1">
    <source>
        <dbReference type="HAMAP-Rule" id="MF_00384"/>
    </source>
</evidence>
<proteinExistence type="inferred from homology"/>
<reference key="1">
    <citation type="journal article" date="2004" name="Science">
        <title>The complete genome sequence of Propionibacterium acnes, a commensal of human skin.</title>
        <authorList>
            <person name="Brueggemann H."/>
            <person name="Henne A."/>
            <person name="Hoster F."/>
            <person name="Liesegang H."/>
            <person name="Wiezer A."/>
            <person name="Strittmatter A."/>
            <person name="Hujer S."/>
            <person name="Duerre P."/>
            <person name="Gottschalk G."/>
        </authorList>
    </citation>
    <scope>NUCLEOTIDE SEQUENCE [LARGE SCALE GENOMIC DNA]</scope>
    <source>
        <strain>DSM 16379 / KPA171202</strain>
    </source>
</reference>
<feature type="chain" id="PRO_0000156596" description="Homoserine kinase">
    <location>
        <begin position="1"/>
        <end position="296"/>
    </location>
</feature>
<feature type="binding site" evidence="1">
    <location>
        <begin position="92"/>
        <end position="102"/>
    </location>
    <ligand>
        <name>ATP</name>
        <dbReference type="ChEBI" id="CHEBI:30616"/>
    </ligand>
</feature>